<accession>Q71RG4</accession>
<accession>B3KU81</accession>
<accession>Q8NDI2</accession>
<accession>Q9BPZ5</accession>
<accession>Q9HAG3</accession>
<reference key="1">
    <citation type="journal article" date="2004" name="Proc. Natl. Acad. Sci. U.S.A.">
        <title>Large-scale cDNA transfection screening for genes related to cancer development and progression.</title>
        <authorList>
            <person name="Wan D."/>
            <person name="Gong Y."/>
            <person name="Qin W."/>
            <person name="Zhang P."/>
            <person name="Li J."/>
            <person name="Wei L."/>
            <person name="Zhou X."/>
            <person name="Li H."/>
            <person name="Qiu X."/>
            <person name="Zhong F."/>
            <person name="He L."/>
            <person name="Yu J."/>
            <person name="Yao G."/>
            <person name="Jiang H."/>
            <person name="Qian L."/>
            <person name="Yu Y."/>
            <person name="Shu H."/>
            <person name="Chen X."/>
            <person name="Xu H."/>
            <person name="Guo M."/>
            <person name="Pan Z."/>
            <person name="Chen Y."/>
            <person name="Ge C."/>
            <person name="Yang S."/>
            <person name="Gu J."/>
        </authorList>
    </citation>
    <scope>NUCLEOTIDE SEQUENCE [LARGE SCALE MRNA] (ISOFORM 2)</scope>
</reference>
<reference key="2">
    <citation type="journal article" date="2003" name="Genome Res.">
        <title>The secreted protein discovery initiative (SPDI), a large-scale effort to identify novel human secreted and transmembrane proteins: a bioinformatics assessment.</title>
        <authorList>
            <person name="Clark H.F."/>
            <person name="Gurney A.L."/>
            <person name="Abaya E."/>
            <person name="Baker K."/>
            <person name="Baldwin D.T."/>
            <person name="Brush J."/>
            <person name="Chen J."/>
            <person name="Chow B."/>
            <person name="Chui C."/>
            <person name="Crowley C."/>
            <person name="Currell B."/>
            <person name="Deuel B."/>
            <person name="Dowd P."/>
            <person name="Eaton D."/>
            <person name="Foster J.S."/>
            <person name="Grimaldi C."/>
            <person name="Gu Q."/>
            <person name="Hass P.E."/>
            <person name="Heldens S."/>
            <person name="Huang A."/>
            <person name="Kim H.S."/>
            <person name="Klimowski L."/>
            <person name="Jin Y."/>
            <person name="Johnson S."/>
            <person name="Lee J."/>
            <person name="Lewis L."/>
            <person name="Liao D."/>
            <person name="Mark M.R."/>
            <person name="Robbie E."/>
            <person name="Sanchez C."/>
            <person name="Schoenfeld J."/>
            <person name="Seshagiri S."/>
            <person name="Simmons L."/>
            <person name="Singh J."/>
            <person name="Smith V."/>
            <person name="Stinson J."/>
            <person name="Vagts A."/>
            <person name="Vandlen R.L."/>
            <person name="Watanabe C."/>
            <person name="Wieand D."/>
            <person name="Woods K."/>
            <person name="Xie M.-H."/>
            <person name="Yansura D.G."/>
            <person name="Yi S."/>
            <person name="Yu G."/>
            <person name="Yuan J."/>
            <person name="Zhang M."/>
            <person name="Zhang Z."/>
            <person name="Goddard A.D."/>
            <person name="Wood W.I."/>
            <person name="Godowski P.J."/>
            <person name="Gray A.M."/>
        </authorList>
    </citation>
    <scope>NUCLEOTIDE SEQUENCE [LARGE SCALE MRNA] (ISOFORM 2)</scope>
</reference>
<reference key="3">
    <citation type="journal article" date="2004" name="Nat. Genet.">
        <title>Complete sequencing and characterization of 21,243 full-length human cDNAs.</title>
        <authorList>
            <person name="Ota T."/>
            <person name="Suzuki Y."/>
            <person name="Nishikawa T."/>
            <person name="Otsuki T."/>
            <person name="Sugiyama T."/>
            <person name="Irie R."/>
            <person name="Wakamatsu A."/>
            <person name="Hayashi K."/>
            <person name="Sato H."/>
            <person name="Nagai K."/>
            <person name="Kimura K."/>
            <person name="Makita H."/>
            <person name="Sekine M."/>
            <person name="Obayashi M."/>
            <person name="Nishi T."/>
            <person name="Shibahara T."/>
            <person name="Tanaka T."/>
            <person name="Ishii S."/>
            <person name="Yamamoto J."/>
            <person name="Saito K."/>
            <person name="Kawai Y."/>
            <person name="Isono Y."/>
            <person name="Nakamura Y."/>
            <person name="Nagahari K."/>
            <person name="Murakami K."/>
            <person name="Yasuda T."/>
            <person name="Iwayanagi T."/>
            <person name="Wagatsuma M."/>
            <person name="Shiratori A."/>
            <person name="Sudo H."/>
            <person name="Hosoiri T."/>
            <person name="Kaku Y."/>
            <person name="Kodaira H."/>
            <person name="Kondo H."/>
            <person name="Sugawara M."/>
            <person name="Takahashi M."/>
            <person name="Kanda K."/>
            <person name="Yokoi T."/>
            <person name="Furuya T."/>
            <person name="Kikkawa E."/>
            <person name="Omura Y."/>
            <person name="Abe K."/>
            <person name="Kamihara K."/>
            <person name="Katsuta N."/>
            <person name="Sato K."/>
            <person name="Tanikawa M."/>
            <person name="Yamazaki M."/>
            <person name="Ninomiya K."/>
            <person name="Ishibashi T."/>
            <person name="Yamashita H."/>
            <person name="Murakawa K."/>
            <person name="Fujimori K."/>
            <person name="Tanai H."/>
            <person name="Kimata M."/>
            <person name="Watanabe M."/>
            <person name="Hiraoka S."/>
            <person name="Chiba Y."/>
            <person name="Ishida S."/>
            <person name="Ono Y."/>
            <person name="Takiguchi S."/>
            <person name="Watanabe S."/>
            <person name="Yosida M."/>
            <person name="Hotuta T."/>
            <person name="Kusano J."/>
            <person name="Kanehori K."/>
            <person name="Takahashi-Fujii A."/>
            <person name="Hara H."/>
            <person name="Tanase T.-O."/>
            <person name="Nomura Y."/>
            <person name="Togiya S."/>
            <person name="Komai F."/>
            <person name="Hara R."/>
            <person name="Takeuchi K."/>
            <person name="Arita M."/>
            <person name="Imose N."/>
            <person name="Musashino K."/>
            <person name="Yuuki H."/>
            <person name="Oshima A."/>
            <person name="Sasaki N."/>
            <person name="Aotsuka S."/>
            <person name="Yoshikawa Y."/>
            <person name="Matsunawa H."/>
            <person name="Ichihara T."/>
            <person name="Shiohata N."/>
            <person name="Sano S."/>
            <person name="Moriya S."/>
            <person name="Momiyama H."/>
            <person name="Satoh N."/>
            <person name="Takami S."/>
            <person name="Terashima Y."/>
            <person name="Suzuki O."/>
            <person name="Nakagawa S."/>
            <person name="Senoh A."/>
            <person name="Mizoguchi H."/>
            <person name="Goto Y."/>
            <person name="Shimizu F."/>
            <person name="Wakebe H."/>
            <person name="Hishigaki H."/>
            <person name="Watanabe T."/>
            <person name="Sugiyama A."/>
            <person name="Takemoto M."/>
            <person name="Kawakami B."/>
            <person name="Yamazaki M."/>
            <person name="Watanabe K."/>
            <person name="Kumagai A."/>
            <person name="Itakura S."/>
            <person name="Fukuzumi Y."/>
            <person name="Fujimori Y."/>
            <person name="Komiyama M."/>
            <person name="Tashiro H."/>
            <person name="Tanigami A."/>
            <person name="Fujiwara T."/>
            <person name="Ono T."/>
            <person name="Yamada K."/>
            <person name="Fujii Y."/>
            <person name="Ozaki K."/>
            <person name="Hirao M."/>
            <person name="Ohmori Y."/>
            <person name="Kawabata A."/>
            <person name="Hikiji T."/>
            <person name="Kobatake N."/>
            <person name="Inagaki H."/>
            <person name="Ikema Y."/>
            <person name="Okamoto S."/>
            <person name="Okitani R."/>
            <person name="Kawakami T."/>
            <person name="Noguchi S."/>
            <person name="Itoh T."/>
            <person name="Shigeta K."/>
            <person name="Senba T."/>
            <person name="Matsumura K."/>
            <person name="Nakajima Y."/>
            <person name="Mizuno T."/>
            <person name="Morinaga M."/>
            <person name="Sasaki M."/>
            <person name="Togashi T."/>
            <person name="Oyama M."/>
            <person name="Hata H."/>
            <person name="Watanabe M."/>
            <person name="Komatsu T."/>
            <person name="Mizushima-Sugano J."/>
            <person name="Satoh T."/>
            <person name="Shirai Y."/>
            <person name="Takahashi Y."/>
            <person name="Nakagawa K."/>
            <person name="Okumura K."/>
            <person name="Nagase T."/>
            <person name="Nomura N."/>
            <person name="Kikuchi H."/>
            <person name="Masuho Y."/>
            <person name="Yamashita R."/>
            <person name="Nakai K."/>
            <person name="Yada T."/>
            <person name="Nakamura Y."/>
            <person name="Ohara O."/>
            <person name="Isogai T."/>
            <person name="Sugano S."/>
        </authorList>
    </citation>
    <scope>NUCLEOTIDE SEQUENCE [LARGE SCALE MRNA] (ISOFORM 3)</scope>
    <source>
        <tissue>Brain</tissue>
        <tissue>Embryo</tissue>
    </source>
</reference>
<reference key="4">
    <citation type="submission" date="2004-07" db="EMBL/GenBank/DDBJ databases">
        <title>Full-length cDNA libraries and normalization.</title>
        <authorList>
            <person name="Li W.B."/>
            <person name="Gruber C."/>
            <person name="Jessee J."/>
            <person name="Polayes D."/>
        </authorList>
    </citation>
    <scope>NUCLEOTIDE SEQUENCE [LARGE SCALE MRNA] (ISOFORM 1)</scope>
    <source>
        <tissue>Fetal brain</tissue>
    </source>
</reference>
<reference key="5">
    <citation type="journal article" date="2007" name="BMC Genomics">
        <title>The full-ORF clone resource of the German cDNA consortium.</title>
        <authorList>
            <person name="Bechtel S."/>
            <person name="Rosenfelder H."/>
            <person name="Duda A."/>
            <person name="Schmidt C.P."/>
            <person name="Ernst U."/>
            <person name="Wellenreuther R."/>
            <person name="Mehrle A."/>
            <person name="Schuster C."/>
            <person name="Bahr A."/>
            <person name="Bloecker H."/>
            <person name="Heubner D."/>
            <person name="Hoerlein A."/>
            <person name="Michel G."/>
            <person name="Wedler H."/>
            <person name="Koehrer K."/>
            <person name="Ottenwaelder B."/>
            <person name="Poustka A."/>
            <person name="Wiemann S."/>
            <person name="Schupp I."/>
        </authorList>
    </citation>
    <scope>NUCLEOTIDE SEQUENCE [LARGE SCALE MRNA] (ISOFORM 2)</scope>
    <source>
        <tissue>Fetal kidney</tissue>
    </source>
</reference>
<reference key="6">
    <citation type="journal article" date="2004" name="Genome Res.">
        <title>The status, quality, and expansion of the NIH full-length cDNA project: the Mammalian Gene Collection (MGC).</title>
        <authorList>
            <consortium name="The MGC Project Team"/>
        </authorList>
    </citation>
    <scope>NUCLEOTIDE SEQUENCE [LARGE SCALE MRNA] (ISOFORMS 2 AND 4)</scope>
    <source>
        <tissue>Brain</tissue>
        <tissue>Eye</tissue>
        <tissue>Uterus</tissue>
    </source>
</reference>
<organism>
    <name type="scientific">Homo sapiens</name>
    <name type="common">Human</name>
    <dbReference type="NCBI Taxonomy" id="9606"/>
    <lineage>
        <taxon>Eukaryota</taxon>
        <taxon>Metazoa</taxon>
        <taxon>Chordata</taxon>
        <taxon>Craniata</taxon>
        <taxon>Vertebrata</taxon>
        <taxon>Euteleostomi</taxon>
        <taxon>Mammalia</taxon>
        <taxon>Eutheria</taxon>
        <taxon>Euarchontoglires</taxon>
        <taxon>Primates</taxon>
        <taxon>Haplorrhini</taxon>
        <taxon>Catarrhini</taxon>
        <taxon>Hominidae</taxon>
        <taxon>Homo</taxon>
    </lineage>
</organism>
<evidence type="ECO:0000255" key="1"/>
<evidence type="ECO:0000255" key="2">
    <source>
        <dbReference type="PROSITE-ProRule" id="PRU00214"/>
    </source>
</evidence>
<evidence type="ECO:0000256" key="3">
    <source>
        <dbReference type="SAM" id="MobiDB-lite"/>
    </source>
</evidence>
<evidence type="ECO:0000303" key="4">
    <source>
    </source>
</evidence>
<evidence type="ECO:0000303" key="5">
    <source>
    </source>
</evidence>
<evidence type="ECO:0000303" key="6">
    <source>
    </source>
</evidence>
<evidence type="ECO:0000303" key="7">
    <source>
    </source>
</evidence>
<evidence type="ECO:0000303" key="8">
    <source>
    </source>
</evidence>
<evidence type="ECO:0000305" key="9"/>
<name>TMUB2_HUMAN</name>
<feature type="chain" id="PRO_0000245312" description="Transmembrane and ubiquitin-like domain-containing protein 2">
    <location>
        <begin position="1"/>
        <end position="321"/>
    </location>
</feature>
<feature type="transmembrane region" description="Helical" evidence="1">
    <location>
        <begin position="36"/>
        <end position="56"/>
    </location>
</feature>
<feature type="transmembrane region" description="Helical" evidence="1">
    <location>
        <begin position="266"/>
        <end position="286"/>
    </location>
</feature>
<feature type="transmembrane region" description="Helical" evidence="1">
    <location>
        <begin position="295"/>
        <end position="315"/>
    </location>
</feature>
<feature type="domain" description="Ubiquitin-like" evidence="2">
    <location>
        <begin position="174"/>
        <end position="247"/>
    </location>
</feature>
<feature type="region of interest" description="Disordered" evidence="3">
    <location>
        <begin position="87"/>
        <end position="131"/>
    </location>
</feature>
<feature type="region of interest" description="Disordered" evidence="3">
    <location>
        <begin position="145"/>
        <end position="170"/>
    </location>
</feature>
<feature type="compositionally biased region" description="Basic and acidic residues" evidence="3">
    <location>
        <begin position="104"/>
        <end position="120"/>
    </location>
</feature>
<feature type="splice variant" id="VSP_019700" description="In isoform 2, isoform 3 and isoform 4." evidence="4 5 6 7 8">
    <location>
        <begin position="1"/>
        <end position="20"/>
    </location>
</feature>
<feature type="splice variant" id="VSP_019701" description="In isoform 4." evidence="6">
    <original>GNDEKAEEAG</original>
    <variation>ANTSLDKKAR</variation>
    <location>
        <begin position="105"/>
        <end position="114"/>
    </location>
</feature>
<feature type="splice variant" id="VSP_019702" description="In isoform 4." evidence="6">
    <location>
        <begin position="115"/>
        <end position="321"/>
    </location>
</feature>
<feature type="splice variant" id="VSP_019703" description="In isoform 3." evidence="5">
    <original>S</original>
    <variation>R</variation>
    <location>
        <position position="201"/>
    </location>
</feature>
<feature type="splice variant" id="VSP_019704" description="In isoform 3." evidence="5">
    <location>
        <begin position="202"/>
        <end position="321"/>
    </location>
</feature>
<feature type="sequence variant" id="VAR_052695" description="In dbSNP:rs9895154.">
    <original>R</original>
    <variation>H</variation>
    <location>
        <position position="228"/>
    </location>
</feature>
<feature type="sequence conflict" description="In Ref. 5; CAD38755." evidence="9" ref="5">
    <original>S</original>
    <variation>R</variation>
    <location>
        <position position="265"/>
    </location>
</feature>
<dbReference type="EMBL" id="AF370373">
    <property type="protein sequence ID" value="AAQ15209.1"/>
    <property type="molecule type" value="mRNA"/>
</dbReference>
<dbReference type="EMBL" id="AY358780">
    <property type="protein sequence ID" value="AAQ89140.1"/>
    <property type="molecule type" value="mRNA"/>
</dbReference>
<dbReference type="EMBL" id="AK021759">
    <property type="protein sequence ID" value="BAB13886.1"/>
    <property type="molecule type" value="mRNA"/>
</dbReference>
<dbReference type="EMBL" id="AK096631">
    <property type="protein sequence ID" value="BAG53343.1"/>
    <property type="molecule type" value="mRNA"/>
</dbReference>
<dbReference type="EMBL" id="CR622157">
    <property type="status" value="NOT_ANNOTATED_CDS"/>
    <property type="molecule type" value="mRNA"/>
</dbReference>
<dbReference type="EMBL" id="AL833899">
    <property type="protein sequence ID" value="CAD38755.1"/>
    <property type="molecule type" value="mRNA"/>
</dbReference>
<dbReference type="EMBL" id="BC001792">
    <property type="protein sequence ID" value="AAH01792.1"/>
    <property type="molecule type" value="mRNA"/>
</dbReference>
<dbReference type="EMBL" id="BC004306">
    <property type="protein sequence ID" value="AAH04306.1"/>
    <property type="molecule type" value="mRNA"/>
</dbReference>
<dbReference type="EMBL" id="BC063489">
    <property type="protein sequence ID" value="AAH63489.1"/>
    <property type="molecule type" value="mRNA"/>
</dbReference>
<dbReference type="CCDS" id="CCDS11479.1">
    <molecule id="Q71RG4-2"/>
</dbReference>
<dbReference type="CCDS" id="CCDS54134.1">
    <molecule id="Q71RG4-1"/>
</dbReference>
<dbReference type="RefSeq" id="NP_001070142.1">
    <molecule id="Q71RG4-1"/>
    <property type="nucleotide sequence ID" value="NM_001076674.3"/>
</dbReference>
<dbReference type="RefSeq" id="NP_001317164.1">
    <property type="nucleotide sequence ID" value="NM_001330235.1"/>
</dbReference>
<dbReference type="RefSeq" id="NP_001340102.1">
    <molecule id="Q71RG4-2"/>
    <property type="nucleotide sequence ID" value="NM_001353173.2"/>
</dbReference>
<dbReference type="RefSeq" id="NP_001340104.1">
    <molecule id="Q71RG4-2"/>
    <property type="nucleotide sequence ID" value="NM_001353175.2"/>
</dbReference>
<dbReference type="RefSeq" id="NP_001340105.1">
    <molecule id="Q71RG4-2"/>
    <property type="nucleotide sequence ID" value="NM_001353176.2"/>
</dbReference>
<dbReference type="RefSeq" id="NP_001340106.1">
    <molecule id="Q71RG4-1"/>
    <property type="nucleotide sequence ID" value="NM_001353177.2"/>
</dbReference>
<dbReference type="RefSeq" id="NP_001340107.1">
    <molecule id="Q71RG4-2"/>
    <property type="nucleotide sequence ID" value="NM_001353178.2"/>
</dbReference>
<dbReference type="RefSeq" id="NP_001340110.1">
    <molecule id="Q71RG4-1"/>
    <property type="nucleotide sequence ID" value="NM_001353181.2"/>
</dbReference>
<dbReference type="RefSeq" id="NP_001340111.1">
    <molecule id="Q71RG4-2"/>
    <property type="nucleotide sequence ID" value="NM_001353182.2"/>
</dbReference>
<dbReference type="RefSeq" id="NP_001340112.1">
    <molecule id="Q71RG4-2"/>
    <property type="nucleotide sequence ID" value="NM_001353183.2"/>
</dbReference>
<dbReference type="RefSeq" id="NP_001340113.1">
    <molecule id="Q71RG4-1"/>
    <property type="nucleotide sequence ID" value="NM_001353184.2"/>
</dbReference>
<dbReference type="RefSeq" id="NP_001340117.1">
    <molecule id="Q71RG4-2"/>
    <property type="nucleotide sequence ID" value="NM_001353188.2"/>
</dbReference>
<dbReference type="RefSeq" id="NP_001340119.1">
    <molecule id="Q71RG4-2"/>
    <property type="nucleotide sequence ID" value="NM_001353190.2"/>
</dbReference>
<dbReference type="RefSeq" id="NP_001340120.1">
    <molecule id="Q71RG4-2"/>
    <property type="nucleotide sequence ID" value="NM_001353191.2"/>
</dbReference>
<dbReference type="RefSeq" id="NP_077012.2">
    <molecule id="Q71RG4-2"/>
    <property type="nucleotide sequence ID" value="NM_024107.4"/>
</dbReference>
<dbReference type="RefSeq" id="NP_803190.2">
    <molecule id="Q71RG4-2"/>
    <property type="nucleotide sequence ID" value="NM_177441.4"/>
</dbReference>
<dbReference type="RefSeq" id="XP_011523500.1">
    <property type="nucleotide sequence ID" value="XM_011525198.2"/>
</dbReference>
<dbReference type="RefSeq" id="XP_011523503.1">
    <molecule id="Q71RG4-1"/>
    <property type="nucleotide sequence ID" value="XM_011525201.3"/>
</dbReference>
<dbReference type="RefSeq" id="XP_011523507.1">
    <property type="nucleotide sequence ID" value="XM_011525205.2"/>
</dbReference>
<dbReference type="RefSeq" id="XP_011523508.1">
    <property type="nucleotide sequence ID" value="XM_011525206.2"/>
</dbReference>
<dbReference type="RefSeq" id="XP_011523509.1">
    <property type="nucleotide sequence ID" value="XM_011525207.2"/>
</dbReference>
<dbReference type="RefSeq" id="XP_011523510.1">
    <property type="nucleotide sequence ID" value="XM_011525208.2"/>
</dbReference>
<dbReference type="RefSeq" id="XP_011523511.1">
    <property type="nucleotide sequence ID" value="XM_011525209.2"/>
</dbReference>
<dbReference type="RefSeq" id="XP_016880537.1">
    <property type="nucleotide sequence ID" value="XM_017025048.1"/>
</dbReference>
<dbReference type="RefSeq" id="XP_016880538.1">
    <property type="nucleotide sequence ID" value="XM_017025049.1"/>
</dbReference>
<dbReference type="RefSeq" id="XP_016880539.1">
    <property type="nucleotide sequence ID" value="XM_017025050.1"/>
</dbReference>
<dbReference type="RefSeq" id="XP_016880540.1">
    <property type="nucleotide sequence ID" value="XM_017025051.1"/>
</dbReference>
<dbReference type="RefSeq" id="XP_047292655.1">
    <molecule id="Q71RG4-1"/>
    <property type="nucleotide sequence ID" value="XM_047436699.1"/>
</dbReference>
<dbReference type="RefSeq" id="XP_047292656.1">
    <molecule id="Q71RG4-1"/>
    <property type="nucleotide sequence ID" value="XM_047436700.1"/>
</dbReference>
<dbReference type="RefSeq" id="XP_047292662.1">
    <molecule id="Q71RG4-2"/>
    <property type="nucleotide sequence ID" value="XM_047436706.1"/>
</dbReference>
<dbReference type="RefSeq" id="XP_047292663.1">
    <molecule id="Q71RG4-2"/>
    <property type="nucleotide sequence ID" value="XM_047436707.1"/>
</dbReference>
<dbReference type="RefSeq" id="XP_054173104.1">
    <molecule id="Q71RG4-1"/>
    <property type="nucleotide sequence ID" value="XM_054317129.1"/>
</dbReference>
<dbReference type="RefSeq" id="XP_054173105.1">
    <molecule id="Q71RG4-1"/>
    <property type="nucleotide sequence ID" value="XM_054317130.1"/>
</dbReference>
<dbReference type="RefSeq" id="XP_054173108.1">
    <molecule id="Q71RG4-1"/>
    <property type="nucleotide sequence ID" value="XM_054317133.1"/>
</dbReference>
<dbReference type="RefSeq" id="XP_054173113.1">
    <molecule id="Q71RG4-2"/>
    <property type="nucleotide sequence ID" value="XM_054317138.1"/>
</dbReference>
<dbReference type="RefSeq" id="XP_054173114.1">
    <molecule id="Q71RG4-2"/>
    <property type="nucleotide sequence ID" value="XM_054317139.1"/>
</dbReference>
<dbReference type="SMR" id="Q71RG4"/>
<dbReference type="BioGRID" id="122537">
    <property type="interactions" value="45"/>
</dbReference>
<dbReference type="DIP" id="DIP-60896N"/>
<dbReference type="FunCoup" id="Q71RG4">
    <property type="interactions" value="2287"/>
</dbReference>
<dbReference type="IntAct" id="Q71RG4">
    <property type="interactions" value="62"/>
</dbReference>
<dbReference type="MINT" id="Q71RG4"/>
<dbReference type="STRING" id="9606.ENSP00000444565"/>
<dbReference type="GlyGen" id="Q71RG4">
    <property type="glycosylation" value="2 sites, 2 N-linked glycans (2 sites)"/>
</dbReference>
<dbReference type="iPTMnet" id="Q71RG4"/>
<dbReference type="PhosphoSitePlus" id="Q71RG4"/>
<dbReference type="SwissPalm" id="Q71RG4"/>
<dbReference type="BioMuta" id="TMUB2"/>
<dbReference type="DMDM" id="110287995"/>
<dbReference type="jPOST" id="Q71RG4"/>
<dbReference type="MassIVE" id="Q71RG4"/>
<dbReference type="PaxDb" id="9606-ENSP00000466971"/>
<dbReference type="PeptideAtlas" id="Q71RG4"/>
<dbReference type="ProteomicsDB" id="68616">
    <molecule id="Q71RG4-1"/>
</dbReference>
<dbReference type="ProteomicsDB" id="68617">
    <molecule id="Q71RG4-2"/>
</dbReference>
<dbReference type="ProteomicsDB" id="68618">
    <molecule id="Q71RG4-3"/>
</dbReference>
<dbReference type="Pumba" id="Q71RG4"/>
<dbReference type="Antibodypedia" id="29728">
    <property type="antibodies" value="76 antibodies from 16 providers"/>
</dbReference>
<dbReference type="DNASU" id="79089"/>
<dbReference type="Ensembl" id="ENST00000319511.6">
    <molecule id="Q71RG4-2"/>
    <property type="protein sequence ID" value="ENSP00000313214.5"/>
    <property type="gene ID" value="ENSG00000168591.16"/>
</dbReference>
<dbReference type="Ensembl" id="ENST00000357984.7">
    <molecule id="Q71RG4-2"/>
    <property type="protein sequence ID" value="ENSP00000350672.3"/>
    <property type="gene ID" value="ENSG00000168591.16"/>
</dbReference>
<dbReference type="Ensembl" id="ENST00000538716.7">
    <molecule id="Q71RG4-1"/>
    <property type="protein sequence ID" value="ENSP00000444565.1"/>
    <property type="gene ID" value="ENSG00000168591.16"/>
</dbReference>
<dbReference type="Ensembl" id="ENST00000587172.1">
    <molecule id="Q71RG4-4"/>
    <property type="protein sequence ID" value="ENSP00000465153.1"/>
    <property type="gene ID" value="ENSG00000168591.16"/>
</dbReference>
<dbReference type="Ensembl" id="ENST00000587989.1">
    <molecule id="Q71RG4-1"/>
    <property type="protein sequence ID" value="ENSP00000466971.1"/>
    <property type="gene ID" value="ENSG00000168591.16"/>
</dbReference>
<dbReference type="Ensembl" id="ENST00000589785.1">
    <molecule id="Q71RG4-2"/>
    <property type="protein sequence ID" value="ENSP00000467364.1"/>
    <property type="gene ID" value="ENSG00000168591.16"/>
</dbReference>
<dbReference type="Ensembl" id="ENST00000589856.1">
    <molecule id="Q71RG4-3"/>
    <property type="protein sequence ID" value="ENSP00000467960.1"/>
    <property type="gene ID" value="ENSG00000168591.16"/>
</dbReference>
<dbReference type="Ensembl" id="ENST00000590235.5">
    <molecule id="Q71RG4-4"/>
    <property type="protein sequence ID" value="ENSP00000465015.1"/>
    <property type="gene ID" value="ENSG00000168591.16"/>
</dbReference>
<dbReference type="Ensembl" id="ENST00000592825.1">
    <molecule id="Q71RG4-4"/>
    <property type="protein sequence ID" value="ENSP00000466189.1"/>
    <property type="gene ID" value="ENSG00000168591.16"/>
</dbReference>
<dbReference type="GeneID" id="79089"/>
<dbReference type="KEGG" id="hsa:79089"/>
<dbReference type="MANE-Select" id="ENST00000538716.7">
    <property type="protein sequence ID" value="ENSP00000444565.1"/>
    <property type="RefSeq nucleotide sequence ID" value="NM_001076674.3"/>
    <property type="RefSeq protein sequence ID" value="NP_001070142.1"/>
</dbReference>
<dbReference type="UCSC" id="uc002ifo.4">
    <molecule id="Q71RG4-1"/>
    <property type="organism name" value="human"/>
</dbReference>
<dbReference type="AGR" id="HGNC:28459"/>
<dbReference type="CTD" id="79089"/>
<dbReference type="DisGeNET" id="79089"/>
<dbReference type="GeneCards" id="TMUB2"/>
<dbReference type="HGNC" id="HGNC:28459">
    <property type="gene designation" value="TMUB2"/>
</dbReference>
<dbReference type="HPA" id="ENSG00000168591">
    <property type="expression patterns" value="Low tissue specificity"/>
</dbReference>
<dbReference type="neXtProt" id="NX_Q71RG4"/>
<dbReference type="OpenTargets" id="ENSG00000168591"/>
<dbReference type="PharmGKB" id="PA145147917"/>
<dbReference type="VEuPathDB" id="HostDB:ENSG00000168591"/>
<dbReference type="eggNOG" id="ENOG502QU8U">
    <property type="taxonomic scope" value="Eukaryota"/>
</dbReference>
<dbReference type="GeneTree" id="ENSGT00390000014069"/>
<dbReference type="HOGENOM" id="CLU_1488557_0_0_1"/>
<dbReference type="InParanoid" id="Q71RG4"/>
<dbReference type="OMA" id="MGNLMIP"/>
<dbReference type="OrthoDB" id="161999at2759"/>
<dbReference type="PAN-GO" id="Q71RG4">
    <property type="GO annotations" value="1 GO annotation based on evolutionary models"/>
</dbReference>
<dbReference type="PhylomeDB" id="Q71RG4"/>
<dbReference type="TreeFam" id="TF329265"/>
<dbReference type="PathwayCommons" id="Q71RG4"/>
<dbReference type="SignaLink" id="Q71RG4"/>
<dbReference type="BioGRID-ORCS" id="79089">
    <property type="hits" value="17 hits in 1159 CRISPR screens"/>
</dbReference>
<dbReference type="ChiTaRS" id="TMUB2">
    <property type="organism name" value="human"/>
</dbReference>
<dbReference type="GeneWiki" id="TMUB2"/>
<dbReference type="GenomeRNAi" id="79089"/>
<dbReference type="Pharos" id="Q71RG4">
    <property type="development level" value="Tdark"/>
</dbReference>
<dbReference type="PRO" id="PR:Q71RG4"/>
<dbReference type="Proteomes" id="UP000005640">
    <property type="component" value="Chromosome 17"/>
</dbReference>
<dbReference type="RNAct" id="Q71RG4">
    <property type="molecule type" value="protein"/>
</dbReference>
<dbReference type="Bgee" id="ENSG00000168591">
    <property type="expression patterns" value="Expressed in granulocyte and 207 other cell types or tissues"/>
</dbReference>
<dbReference type="ExpressionAtlas" id="Q71RG4">
    <property type="expression patterns" value="baseline and differential"/>
</dbReference>
<dbReference type="GO" id="GO:0016020">
    <property type="term" value="C:membrane"/>
    <property type="evidence" value="ECO:0007669"/>
    <property type="project" value="UniProtKB-SubCell"/>
</dbReference>
<dbReference type="GO" id="GO:0036503">
    <property type="term" value="P:ERAD pathway"/>
    <property type="evidence" value="ECO:0000318"/>
    <property type="project" value="GO_Central"/>
</dbReference>
<dbReference type="CDD" id="cd17132">
    <property type="entry name" value="Ubl_TMUB2"/>
    <property type="match status" value="1"/>
</dbReference>
<dbReference type="Gene3D" id="3.10.20.90">
    <property type="entry name" value="Phosphatidylinositol 3-kinase Catalytic Subunit, Chain A, domain 1"/>
    <property type="match status" value="1"/>
</dbReference>
<dbReference type="InterPro" id="IPR040352">
    <property type="entry name" value="TMUB1/2"/>
</dbReference>
<dbReference type="InterPro" id="IPR000626">
    <property type="entry name" value="Ubiquitin-like_dom"/>
</dbReference>
<dbReference type="InterPro" id="IPR029071">
    <property type="entry name" value="Ubiquitin-like_domsf"/>
</dbReference>
<dbReference type="PANTHER" id="PTHR14557">
    <property type="entry name" value="PROTEIN C7ORF21"/>
    <property type="match status" value="1"/>
</dbReference>
<dbReference type="PANTHER" id="PTHR14557:SF4">
    <property type="entry name" value="TRANSMEMBRANE AND UBIQUITIN-LIKE DOMAIN-CONTAINING PROTEIN 2"/>
    <property type="match status" value="1"/>
</dbReference>
<dbReference type="Pfam" id="PF00240">
    <property type="entry name" value="ubiquitin"/>
    <property type="match status" value="1"/>
</dbReference>
<dbReference type="SMART" id="SM00213">
    <property type="entry name" value="UBQ"/>
    <property type="match status" value="1"/>
</dbReference>
<dbReference type="SUPFAM" id="SSF54236">
    <property type="entry name" value="Ubiquitin-like"/>
    <property type="match status" value="1"/>
</dbReference>
<dbReference type="PROSITE" id="PS50053">
    <property type="entry name" value="UBIQUITIN_2"/>
    <property type="match status" value="1"/>
</dbReference>
<gene>
    <name type="primary">TMUB2</name>
    <name type="ORF">FP2653</name>
    <name type="ORF">UNQ1897/PRO4343</name>
</gene>
<sequence>MISRHLQNNLMSVDPASSQAMELSDVTLIEGVGNEVMVVAGVVVLILALVLAWLSTYVADSGSNQLLGAIVSAGDTSVLHLGHVDHLVAGQGNPEPTELPHPSEGNDEKAEEAGEGRGDSTGEAGAGGGVEPSLEHLLDIQGLPKRQAGAGSSSPEAPLRSEDSTCLPPSPGLITVRLKFLNDTEELAVARPEDTVGALKSKYFPGQESQMKLIYQGRLLQDPARTLRSLNITDNCVIHCHRSPPGSAVPGPSASLAPSATEPPSLGVNVGSLMVPVFVVLLGVVWYFRINYRQFFTAPATVSLVGVTVFFSFLVFGMYGR</sequence>
<proteinExistence type="evidence at protein level"/>
<protein>
    <recommendedName>
        <fullName>Transmembrane and ubiquitin-like domain-containing protein 2</fullName>
    </recommendedName>
</protein>
<comment type="interaction">
    <interactant intactId="EBI-2820477">
        <id>Q71RG4</id>
    </interactant>
    <interactant intactId="EBI-13059134">
        <id>Q13520</id>
        <label>AQP6</label>
    </interactant>
    <organismsDiffer>false</organismsDiffer>
    <experiments>3</experiments>
</comment>
<comment type="interaction">
    <interactant intactId="EBI-2820477">
        <id>Q71RG4</id>
    </interactant>
    <interactant intactId="EBI-11343438">
        <id>Q3SXY8</id>
        <label>ARL13B</label>
    </interactant>
    <organismsDiffer>false</organismsDiffer>
    <experiments>3</experiments>
</comment>
<comment type="interaction">
    <interactant intactId="EBI-2820477">
        <id>Q71RG4</id>
    </interactant>
    <interactant intactId="EBI-747430">
        <id>Q9BXK5</id>
        <label>BCL2L13</label>
    </interactant>
    <organismsDiffer>false</organismsDiffer>
    <experiments>3</experiments>
</comment>
<comment type="interaction">
    <interactant intactId="EBI-2820477">
        <id>Q71RG4</id>
    </interactant>
    <interactant intactId="EBI-781551">
        <id>Q9Y282</id>
        <label>ERGIC3</label>
    </interactant>
    <organismsDiffer>false</organismsDiffer>
    <experiments>3</experiments>
</comment>
<comment type="interaction">
    <interactant intactId="EBI-2820477">
        <id>Q71RG4</id>
    </interactant>
    <interactant intactId="EBI-18304435">
        <id>Q5JX71</id>
        <label>FAM209A</label>
    </interactant>
    <organismsDiffer>false</organismsDiffer>
    <experiments>3</experiments>
</comment>
<comment type="interaction">
    <interactant intactId="EBI-2820477">
        <id>Q71RG4</id>
    </interactant>
    <interactant intactId="EBI-3908586">
        <id>O75712</id>
        <label>GJB3</label>
    </interactant>
    <organismsDiffer>false</organismsDiffer>
    <experiments>3</experiments>
</comment>
<comment type="interaction">
    <interactant intactId="EBI-2820477">
        <id>Q71RG4</id>
    </interactant>
    <interactant intactId="EBI-712073">
        <id>Q8NBJ4</id>
        <label>GOLM1</label>
    </interactant>
    <organismsDiffer>false</organismsDiffer>
    <experiments>3</experiments>
</comment>
<comment type="interaction">
    <interactant intactId="EBI-2820477">
        <id>Q71RG4</id>
    </interactant>
    <interactant intactId="EBI-11721746">
        <id>Q8TED1</id>
        <label>GPX8</label>
    </interactant>
    <organismsDiffer>false</organismsDiffer>
    <experiments>3</experiments>
</comment>
<comment type="interaction">
    <interactant intactId="EBI-2820477">
        <id>Q71RG4</id>
    </interactant>
    <interactant intactId="EBI-1031656">
        <id>Q13651</id>
        <label>IL10RA</label>
    </interactant>
    <organismsDiffer>false</organismsDiffer>
    <experiments>3</experiments>
</comment>
<comment type="interaction">
    <interactant intactId="EBI-2820477">
        <id>Q71RG4</id>
    </interactant>
    <interactant intactId="EBI-12820341">
        <id>Q96JQ5</id>
        <label>MS4A4A</label>
    </interactant>
    <organismsDiffer>false</organismsDiffer>
    <experiments>3</experiments>
</comment>
<comment type="interaction">
    <interactant intactId="EBI-2820477">
        <id>Q71RG4</id>
    </interactant>
    <interactant intactId="EBI-10969203">
        <id>O14524-2</id>
        <label>NEMP1</label>
    </interactant>
    <organismsDiffer>false</organismsDiffer>
    <experiments>3</experiments>
</comment>
<comment type="interaction">
    <interactant intactId="EBI-2820477">
        <id>Q71RG4</id>
    </interactant>
    <interactant intactId="EBI-347996">
        <id>O43765</id>
        <label>SGTA</label>
    </interactant>
    <organismsDiffer>false</organismsDiffer>
    <experiments>3</experiments>
</comment>
<comment type="interaction">
    <interactant intactId="EBI-2820477">
        <id>Q71RG4</id>
    </interactant>
    <interactant intactId="EBI-3923031">
        <id>Q14973</id>
        <label>SLC10A1</label>
    </interactant>
    <organismsDiffer>false</organismsDiffer>
    <experiments>3</experiments>
</comment>
<comment type="interaction">
    <interactant intactId="EBI-2820477">
        <id>Q71RG4</id>
    </interactant>
    <interactant intactId="EBI-310962">
        <id>Q9UPZ6</id>
        <label>THSD7A</label>
    </interactant>
    <organismsDiffer>false</organismsDiffer>
    <experiments>3</experiments>
</comment>
<comment type="interaction">
    <interactant intactId="EBI-2820477">
        <id>Q71RG4</id>
    </interactant>
    <interactant intactId="EBI-18178701">
        <id>Q4KMG9</id>
        <label>TMEM52B</label>
    </interactant>
    <organismsDiffer>false</organismsDiffer>
    <experiments>3</experiments>
</comment>
<comment type="interaction">
    <interactant intactId="EBI-2820477">
        <id>Q71RG4</id>
    </interactant>
    <interactant intactId="EBI-10173939">
        <id>Q9UMX0-2</id>
        <label>UBQLN1</label>
    </interactant>
    <organismsDiffer>false</organismsDiffer>
    <experiments>3</experiments>
</comment>
<comment type="interaction">
    <interactant intactId="EBI-2820477">
        <id>Q71RG4</id>
    </interactant>
    <interactant intactId="EBI-12237619">
        <id>O75841</id>
        <label>UPK1B</label>
    </interactant>
    <organismsDiffer>false</organismsDiffer>
    <experiments>3</experiments>
</comment>
<comment type="interaction">
    <interactant intactId="EBI-25831574">
        <id>Q71RG4-4</id>
    </interactant>
    <interactant intactId="EBI-21535880">
        <id>Q92870-2</id>
        <label>APBB2</label>
    </interactant>
    <organismsDiffer>false</organismsDiffer>
    <experiments>3</experiments>
</comment>
<comment type="interaction">
    <interactant intactId="EBI-25831574">
        <id>Q71RG4-4</id>
    </interactant>
    <interactant intactId="EBI-930964">
        <id>P54253</id>
        <label>ATXN1</label>
    </interactant>
    <organismsDiffer>false</organismsDiffer>
    <experiments>3</experiments>
</comment>
<comment type="interaction">
    <interactant intactId="EBI-25831574">
        <id>Q71RG4-4</id>
    </interactant>
    <interactant intactId="EBI-25837549">
        <id>P28329-3</id>
        <label>CHAT</label>
    </interactant>
    <organismsDiffer>false</organismsDiffer>
    <experiments>3</experiments>
</comment>
<comment type="interaction">
    <interactant intactId="EBI-25831574">
        <id>Q71RG4-4</id>
    </interactant>
    <interactant intactId="EBI-25840379">
        <id>Q14203-5</id>
        <label>DCTN1</label>
    </interactant>
    <organismsDiffer>false</organismsDiffer>
    <experiments>3</experiments>
</comment>
<comment type="interaction">
    <interactant intactId="EBI-25831574">
        <id>Q71RG4-4</id>
    </interactant>
    <interactant intactId="EBI-10976677">
        <id>G5E9A7</id>
        <label>DMWD</label>
    </interactant>
    <organismsDiffer>false</organismsDiffer>
    <experiments>3</experiments>
</comment>
<comment type="interaction">
    <interactant intactId="EBI-25831574">
        <id>Q71RG4-4</id>
    </interactant>
    <interactant intactId="EBI-348399">
        <id>P22607</id>
        <label>FGFR3</label>
    </interactant>
    <organismsDiffer>false</organismsDiffer>
    <experiments>3</experiments>
</comment>
<comment type="interaction">
    <interactant intactId="EBI-25831574">
        <id>Q71RG4-4</id>
    </interactant>
    <interactant intactId="EBI-15639515">
        <id>O15354</id>
        <label>GPR37</label>
    </interactant>
    <organismsDiffer>false</organismsDiffer>
    <experiments>3</experiments>
</comment>
<comment type="interaction">
    <interactant intactId="EBI-25831574">
        <id>Q71RG4-4</id>
    </interactant>
    <interactant intactId="EBI-747754">
        <id>P28799</id>
        <label>GRN</label>
    </interactant>
    <organismsDiffer>false</organismsDiffer>
    <experiments>3</experiments>
</comment>
<comment type="interaction">
    <interactant intactId="EBI-25831574">
        <id>Q71RG4-4</id>
    </interactant>
    <interactant intactId="EBI-25860013">
        <id>P28799-2</id>
        <label>GRN</label>
    </interactant>
    <organismsDiffer>false</organismsDiffer>
    <experiments>3</experiments>
</comment>
<comment type="interaction">
    <interactant intactId="EBI-25831574">
        <id>Q71RG4-4</id>
    </interactant>
    <interactant intactId="EBI-351506">
        <id>P06396</id>
        <label>GSN</label>
    </interactant>
    <organismsDiffer>false</organismsDiffer>
    <experiments>3</experiments>
</comment>
<comment type="interaction">
    <interactant intactId="EBI-25831574">
        <id>Q71RG4-4</id>
    </interactant>
    <interactant intactId="EBI-352682">
        <id>P04792</id>
        <label>HSPB1</label>
    </interactant>
    <organismsDiffer>false</organismsDiffer>
    <experiments>3</experiments>
</comment>
<comment type="interaction">
    <interactant intactId="EBI-25831574">
        <id>Q71RG4-4</id>
    </interactant>
    <interactant intactId="EBI-466029">
        <id>P42858</id>
        <label>HTT</label>
    </interactant>
    <organismsDiffer>false</organismsDiffer>
    <experiments>6</experiments>
</comment>
<comment type="interaction">
    <interactant intactId="EBI-25831574">
        <id>Q71RG4-4</id>
    </interactant>
    <interactant intactId="EBI-1055254">
        <id>Q8WXH2</id>
        <label>JPH3</label>
    </interactant>
    <organismsDiffer>false</organismsDiffer>
    <experiments>3</experiments>
</comment>
<comment type="interaction">
    <interactant intactId="EBI-25831574">
        <id>Q71RG4-4</id>
    </interactant>
    <interactant intactId="EBI-10975473">
        <id>O60333-2</id>
        <label>KIF1B</label>
    </interactant>
    <organismsDiffer>false</organismsDiffer>
    <experiments>3</experiments>
</comment>
<comment type="interaction">
    <interactant intactId="EBI-25831574">
        <id>Q71RG4-4</id>
    </interactant>
    <interactant intactId="EBI-50433196">
        <id>A0A6Q8PF08</id>
        <label>PMP22</label>
    </interactant>
    <organismsDiffer>false</organismsDiffer>
    <experiments>3</experiments>
</comment>
<comment type="interaction">
    <interactant intactId="EBI-25831574">
        <id>Q71RG4-4</id>
    </interactant>
    <interactant intactId="EBI-21251460">
        <id>O60260-5</id>
        <label>PRKN</label>
    </interactant>
    <organismsDiffer>false</organismsDiffer>
    <experiments>3</experiments>
</comment>
<comment type="interaction">
    <interactant intactId="EBI-25831574">
        <id>Q71RG4-4</id>
    </interactant>
    <interactant intactId="EBI-396669">
        <id>Q9Y3C5</id>
        <label>RNF11</label>
    </interactant>
    <organismsDiffer>false</organismsDiffer>
    <experiments>3</experiments>
</comment>
<comment type="interaction">
    <interactant intactId="EBI-25831574">
        <id>Q71RG4-4</id>
    </interactant>
    <interactant intactId="EBI-5235340">
        <id>Q7Z699</id>
        <label>SPRED1</label>
    </interactant>
    <organismsDiffer>false</organismsDiffer>
    <experiments>3</experiments>
</comment>
<comment type="interaction">
    <interactant intactId="EBI-25831574">
        <id>Q71RG4-4</id>
    </interactant>
    <interactant intactId="EBI-12806590">
        <id>Q86WV8</id>
        <label>TSC1</label>
    </interactant>
    <organismsDiffer>false</organismsDiffer>
    <experiments>3</experiments>
</comment>
<comment type="interaction">
    <interactant intactId="EBI-25831574">
        <id>Q71RG4-4</id>
    </interactant>
    <interactant intactId="EBI-741480">
        <id>Q9UMX0</id>
        <label>UBQLN1</label>
    </interactant>
    <organismsDiffer>false</organismsDiffer>
    <experiments>3</experiments>
</comment>
<comment type="interaction">
    <interactant intactId="EBI-25831574">
        <id>Q71RG4-4</id>
    </interactant>
    <interactant intactId="EBI-720609">
        <id>O76024</id>
        <label>WFS1</label>
    </interactant>
    <organismsDiffer>false</organismsDiffer>
    <experiments>3</experiments>
</comment>
<comment type="interaction">
    <interactant intactId="EBI-25831574">
        <id>Q71RG4-4</id>
    </interactant>
    <interactant intactId="EBI-25900580">
        <id>Q9Y649</id>
    </interactant>
    <organismsDiffer>false</organismsDiffer>
    <experiments>3</experiments>
</comment>
<comment type="subcellular location">
    <subcellularLocation>
        <location evidence="9">Membrane</location>
        <topology evidence="9">Multi-pass membrane protein</topology>
    </subcellularLocation>
</comment>
<comment type="alternative products">
    <event type="alternative splicing"/>
    <isoform>
        <id>Q71RG4-1</id>
        <name>1</name>
        <sequence type="displayed"/>
    </isoform>
    <isoform>
        <id>Q71RG4-2</id>
        <name>2</name>
        <sequence type="described" ref="VSP_019700"/>
    </isoform>
    <isoform>
        <id>Q71RG4-3</id>
        <name>3</name>
        <sequence type="described" ref="VSP_019700 VSP_019703 VSP_019704"/>
    </isoform>
    <isoform>
        <id>Q71RG4-4</id>
        <name>4</name>
        <sequence type="described" ref="VSP_019700 VSP_019701 VSP_019702"/>
    </isoform>
</comment>
<keyword id="KW-0025">Alternative splicing</keyword>
<keyword id="KW-0472">Membrane</keyword>
<keyword id="KW-1267">Proteomics identification</keyword>
<keyword id="KW-1185">Reference proteome</keyword>
<keyword id="KW-0812">Transmembrane</keyword>
<keyword id="KW-1133">Transmembrane helix</keyword>